<keyword id="KW-0963">Cytoplasm</keyword>
<keyword id="KW-0227">DNA damage</keyword>
<keyword id="KW-0233">DNA recombination</keyword>
<keyword id="KW-0234">DNA repair</keyword>
<keyword id="KW-0238">DNA-binding</keyword>
<keyword id="KW-0255">Endonuclease</keyword>
<keyword id="KW-0378">Hydrolase</keyword>
<keyword id="KW-0460">Magnesium</keyword>
<keyword id="KW-0479">Metal-binding</keyword>
<keyword id="KW-0540">Nuclease</keyword>
<accession>Q5X5S0</accession>
<sequence length="174" mass="19169">MTIILGIDPGSRVTGYGLIKESDRKIAYIDSGCIRTSNDVELSHKLLQIYDGICELMDHYSPTEVAIEQIFMHNNPNSALKLGHARGVAMVAAASHRAKICEYSAREIKQSVVGYGAAEKDQVSHMVVELLQLNRAPQKDAADALAIAICHSHMRNGLSKLIGSRGTKRRRMRL</sequence>
<dbReference type="EC" id="3.1.21.10" evidence="1"/>
<dbReference type="EMBL" id="CR628336">
    <property type="protein sequence ID" value="CAH12401.1"/>
    <property type="molecule type" value="Genomic_DNA"/>
</dbReference>
<dbReference type="RefSeq" id="WP_011213599.1">
    <property type="nucleotide sequence ID" value="NC_006368.1"/>
</dbReference>
<dbReference type="SMR" id="Q5X5S0"/>
<dbReference type="KEGG" id="lpp:lpp1250"/>
<dbReference type="LegioList" id="lpp1250"/>
<dbReference type="HOGENOM" id="CLU_091257_2_1_6"/>
<dbReference type="GO" id="GO:0005737">
    <property type="term" value="C:cytoplasm"/>
    <property type="evidence" value="ECO:0007669"/>
    <property type="project" value="UniProtKB-SubCell"/>
</dbReference>
<dbReference type="GO" id="GO:0048476">
    <property type="term" value="C:Holliday junction resolvase complex"/>
    <property type="evidence" value="ECO:0007669"/>
    <property type="project" value="UniProtKB-UniRule"/>
</dbReference>
<dbReference type="GO" id="GO:0008821">
    <property type="term" value="F:crossover junction DNA endonuclease activity"/>
    <property type="evidence" value="ECO:0007669"/>
    <property type="project" value="UniProtKB-UniRule"/>
</dbReference>
<dbReference type="GO" id="GO:0003677">
    <property type="term" value="F:DNA binding"/>
    <property type="evidence" value="ECO:0007669"/>
    <property type="project" value="UniProtKB-KW"/>
</dbReference>
<dbReference type="GO" id="GO:0000287">
    <property type="term" value="F:magnesium ion binding"/>
    <property type="evidence" value="ECO:0007669"/>
    <property type="project" value="UniProtKB-UniRule"/>
</dbReference>
<dbReference type="GO" id="GO:0006310">
    <property type="term" value="P:DNA recombination"/>
    <property type="evidence" value="ECO:0007669"/>
    <property type="project" value="UniProtKB-UniRule"/>
</dbReference>
<dbReference type="GO" id="GO:0006281">
    <property type="term" value="P:DNA repair"/>
    <property type="evidence" value="ECO:0007669"/>
    <property type="project" value="UniProtKB-UniRule"/>
</dbReference>
<dbReference type="CDD" id="cd16962">
    <property type="entry name" value="RuvC"/>
    <property type="match status" value="1"/>
</dbReference>
<dbReference type="FunFam" id="3.30.420.10:FF:000002">
    <property type="entry name" value="Crossover junction endodeoxyribonuclease RuvC"/>
    <property type="match status" value="1"/>
</dbReference>
<dbReference type="Gene3D" id="3.30.420.10">
    <property type="entry name" value="Ribonuclease H-like superfamily/Ribonuclease H"/>
    <property type="match status" value="1"/>
</dbReference>
<dbReference type="HAMAP" id="MF_00034">
    <property type="entry name" value="RuvC"/>
    <property type="match status" value="1"/>
</dbReference>
<dbReference type="InterPro" id="IPR012337">
    <property type="entry name" value="RNaseH-like_sf"/>
</dbReference>
<dbReference type="InterPro" id="IPR036397">
    <property type="entry name" value="RNaseH_sf"/>
</dbReference>
<dbReference type="InterPro" id="IPR020563">
    <property type="entry name" value="X-over_junc_endoDNase_Mg_BS"/>
</dbReference>
<dbReference type="InterPro" id="IPR002176">
    <property type="entry name" value="X-over_junc_endoDNase_RuvC"/>
</dbReference>
<dbReference type="NCBIfam" id="NF000711">
    <property type="entry name" value="PRK00039.2-1"/>
    <property type="match status" value="1"/>
</dbReference>
<dbReference type="NCBIfam" id="TIGR00228">
    <property type="entry name" value="ruvC"/>
    <property type="match status" value="1"/>
</dbReference>
<dbReference type="PANTHER" id="PTHR30194">
    <property type="entry name" value="CROSSOVER JUNCTION ENDODEOXYRIBONUCLEASE RUVC"/>
    <property type="match status" value="1"/>
</dbReference>
<dbReference type="PANTHER" id="PTHR30194:SF3">
    <property type="entry name" value="CROSSOVER JUNCTION ENDODEOXYRIBONUCLEASE RUVC"/>
    <property type="match status" value="1"/>
</dbReference>
<dbReference type="Pfam" id="PF02075">
    <property type="entry name" value="RuvC"/>
    <property type="match status" value="1"/>
</dbReference>
<dbReference type="PRINTS" id="PR00696">
    <property type="entry name" value="RSOLVASERUVC"/>
</dbReference>
<dbReference type="SUPFAM" id="SSF53098">
    <property type="entry name" value="Ribonuclease H-like"/>
    <property type="match status" value="1"/>
</dbReference>
<dbReference type="PROSITE" id="PS01321">
    <property type="entry name" value="RUVC"/>
    <property type="match status" value="1"/>
</dbReference>
<comment type="function">
    <text evidence="1">The RuvA-RuvB-RuvC complex processes Holliday junction (HJ) DNA during genetic recombination and DNA repair. Endonuclease that resolves HJ intermediates. Cleaves cruciform DNA by making single-stranded nicks across the HJ at symmetrical positions within the homologous arms, yielding a 5'-phosphate and a 3'-hydroxyl group; requires a central core of homology in the junction. The consensus cleavage sequence is 5'-(A/T)TT(C/G)-3'. Cleavage occurs on the 3'-side of the TT dinucleotide at the point of strand exchange. HJ branch migration catalyzed by RuvA-RuvB allows RuvC to scan DNA until it finds its consensus sequence, where it cleaves and resolves the cruciform DNA.</text>
</comment>
<comment type="catalytic activity">
    <reaction evidence="1">
        <text>Endonucleolytic cleavage at a junction such as a reciprocal single-stranded crossover between two homologous DNA duplexes (Holliday junction).</text>
        <dbReference type="EC" id="3.1.21.10"/>
    </reaction>
</comment>
<comment type="cofactor">
    <cofactor evidence="1">
        <name>Mg(2+)</name>
        <dbReference type="ChEBI" id="CHEBI:18420"/>
    </cofactor>
    <text evidence="1">Binds 2 Mg(2+) ion per subunit.</text>
</comment>
<comment type="subunit">
    <text evidence="1">Homodimer which binds Holliday junction (HJ) DNA. The HJ becomes 2-fold symmetrical on binding to RuvC with unstacked arms; it has a different conformation from HJ DNA in complex with RuvA. In the full resolvosome a probable DNA-RuvA(4)-RuvB(12)-RuvC(2) complex forms which resolves the HJ.</text>
</comment>
<comment type="subcellular location">
    <subcellularLocation>
        <location evidence="1">Cytoplasm</location>
    </subcellularLocation>
</comment>
<comment type="similarity">
    <text evidence="1">Belongs to the RuvC family.</text>
</comment>
<reference key="1">
    <citation type="journal article" date="2004" name="Nat. Genet.">
        <title>Evidence in the Legionella pneumophila genome for exploitation of host cell functions and high genome plasticity.</title>
        <authorList>
            <person name="Cazalet C."/>
            <person name="Rusniok C."/>
            <person name="Brueggemann H."/>
            <person name="Zidane N."/>
            <person name="Magnier A."/>
            <person name="Ma L."/>
            <person name="Tichit M."/>
            <person name="Jarraud S."/>
            <person name="Bouchier C."/>
            <person name="Vandenesch F."/>
            <person name="Kunst F."/>
            <person name="Etienne J."/>
            <person name="Glaser P."/>
            <person name="Buchrieser C."/>
        </authorList>
    </citation>
    <scope>NUCLEOTIDE SEQUENCE [LARGE SCALE GENOMIC DNA]</scope>
    <source>
        <strain>Paris</strain>
    </source>
</reference>
<gene>
    <name evidence="1" type="primary">ruvC</name>
    <name type="ordered locus">lpp1250</name>
</gene>
<name>RUVC_LEGPA</name>
<protein>
    <recommendedName>
        <fullName evidence="1">Crossover junction endodeoxyribonuclease RuvC</fullName>
        <ecNumber evidence="1">3.1.21.10</ecNumber>
    </recommendedName>
    <alternativeName>
        <fullName evidence="1">Holliday junction nuclease RuvC</fullName>
    </alternativeName>
    <alternativeName>
        <fullName evidence="1">Holliday junction resolvase RuvC</fullName>
    </alternativeName>
</protein>
<evidence type="ECO:0000255" key="1">
    <source>
        <dbReference type="HAMAP-Rule" id="MF_00034"/>
    </source>
</evidence>
<proteinExistence type="inferred from homology"/>
<organism>
    <name type="scientific">Legionella pneumophila (strain Paris)</name>
    <dbReference type="NCBI Taxonomy" id="297246"/>
    <lineage>
        <taxon>Bacteria</taxon>
        <taxon>Pseudomonadati</taxon>
        <taxon>Pseudomonadota</taxon>
        <taxon>Gammaproteobacteria</taxon>
        <taxon>Legionellales</taxon>
        <taxon>Legionellaceae</taxon>
        <taxon>Legionella</taxon>
    </lineage>
</organism>
<feature type="chain" id="PRO_0000225150" description="Crossover junction endodeoxyribonuclease RuvC">
    <location>
        <begin position="1"/>
        <end position="174"/>
    </location>
</feature>
<feature type="active site" evidence="1">
    <location>
        <position position="8"/>
    </location>
</feature>
<feature type="active site" evidence="1">
    <location>
        <position position="68"/>
    </location>
</feature>
<feature type="active site" evidence="1">
    <location>
        <position position="140"/>
    </location>
</feature>
<feature type="binding site" evidence="1">
    <location>
        <position position="8"/>
    </location>
    <ligand>
        <name>Mg(2+)</name>
        <dbReference type="ChEBI" id="CHEBI:18420"/>
        <label>1</label>
    </ligand>
</feature>
<feature type="binding site" evidence="1">
    <location>
        <position position="68"/>
    </location>
    <ligand>
        <name>Mg(2+)</name>
        <dbReference type="ChEBI" id="CHEBI:18420"/>
        <label>2</label>
    </ligand>
</feature>
<feature type="binding site" evidence="1">
    <location>
        <position position="140"/>
    </location>
    <ligand>
        <name>Mg(2+)</name>
        <dbReference type="ChEBI" id="CHEBI:18420"/>
        <label>1</label>
    </ligand>
</feature>